<comment type="function">
    <text evidence="1">Catalyzes the reversible interconversion of serine and glycine with tetrahydrofolate (THF) serving as the one-carbon carrier. This reaction serves as the major source of one-carbon groups required for the biosynthesis of purines, thymidylate, methionine, and other important biomolecules. Also exhibits THF-independent aldolase activity toward beta-hydroxyamino acids, producing glycine and aldehydes, via a retro-aldol mechanism.</text>
</comment>
<comment type="catalytic activity">
    <reaction evidence="1">
        <text>(6R)-5,10-methylene-5,6,7,8-tetrahydrofolate + glycine + H2O = (6S)-5,6,7,8-tetrahydrofolate + L-serine</text>
        <dbReference type="Rhea" id="RHEA:15481"/>
        <dbReference type="ChEBI" id="CHEBI:15377"/>
        <dbReference type="ChEBI" id="CHEBI:15636"/>
        <dbReference type="ChEBI" id="CHEBI:33384"/>
        <dbReference type="ChEBI" id="CHEBI:57305"/>
        <dbReference type="ChEBI" id="CHEBI:57453"/>
        <dbReference type="EC" id="2.1.2.1"/>
    </reaction>
</comment>
<comment type="cofactor">
    <cofactor evidence="1">
        <name>pyridoxal 5'-phosphate</name>
        <dbReference type="ChEBI" id="CHEBI:597326"/>
    </cofactor>
</comment>
<comment type="pathway">
    <text evidence="1">One-carbon metabolism; tetrahydrofolate interconversion.</text>
</comment>
<comment type="pathway">
    <text evidence="1">Amino-acid biosynthesis; glycine biosynthesis; glycine from L-serine: step 1/1.</text>
</comment>
<comment type="subunit">
    <text evidence="1">Homodimer.</text>
</comment>
<comment type="subcellular location">
    <subcellularLocation>
        <location evidence="1">Cytoplasm</location>
    </subcellularLocation>
</comment>
<comment type="similarity">
    <text evidence="1">Belongs to the SHMT family.</text>
</comment>
<name>GLYA_LEPIN</name>
<organism>
    <name type="scientific">Leptospira interrogans serogroup Icterohaemorrhagiae serovar Lai (strain 56601)</name>
    <dbReference type="NCBI Taxonomy" id="189518"/>
    <lineage>
        <taxon>Bacteria</taxon>
        <taxon>Pseudomonadati</taxon>
        <taxon>Spirochaetota</taxon>
        <taxon>Spirochaetia</taxon>
        <taxon>Leptospirales</taxon>
        <taxon>Leptospiraceae</taxon>
        <taxon>Leptospira</taxon>
    </lineage>
</organism>
<proteinExistence type="inferred from homology"/>
<accession>Q8F6A0</accession>
<dbReference type="EC" id="2.1.2.1" evidence="1"/>
<dbReference type="EMBL" id="AE010300">
    <property type="protein sequence ID" value="AAN48608.1"/>
    <property type="molecule type" value="Genomic_DNA"/>
</dbReference>
<dbReference type="RefSeq" id="NP_711590.1">
    <property type="nucleotide sequence ID" value="NC_004342.2"/>
</dbReference>
<dbReference type="RefSeq" id="WP_001160150.1">
    <property type="nucleotide sequence ID" value="NC_004342.2"/>
</dbReference>
<dbReference type="SMR" id="Q8F6A0"/>
<dbReference type="FunCoup" id="Q8F6A0">
    <property type="interactions" value="478"/>
</dbReference>
<dbReference type="STRING" id="189518.LA_1409"/>
<dbReference type="PaxDb" id="189518-LA_1409"/>
<dbReference type="EnsemblBacteria" id="AAN48608">
    <property type="protein sequence ID" value="AAN48608"/>
    <property type="gene ID" value="LA_1409"/>
</dbReference>
<dbReference type="GeneID" id="61142218"/>
<dbReference type="KEGG" id="lil:LA_1409"/>
<dbReference type="PATRIC" id="fig|189518.3.peg.1404"/>
<dbReference type="HOGENOM" id="CLU_022477_2_1_12"/>
<dbReference type="InParanoid" id="Q8F6A0"/>
<dbReference type="OrthoDB" id="9803846at2"/>
<dbReference type="UniPathway" id="UPA00193"/>
<dbReference type="UniPathway" id="UPA00288">
    <property type="reaction ID" value="UER01023"/>
</dbReference>
<dbReference type="Proteomes" id="UP000001408">
    <property type="component" value="Chromosome I"/>
</dbReference>
<dbReference type="GO" id="GO:0005737">
    <property type="term" value="C:cytoplasm"/>
    <property type="evidence" value="ECO:0000318"/>
    <property type="project" value="GO_Central"/>
</dbReference>
<dbReference type="GO" id="GO:0005829">
    <property type="term" value="C:cytosol"/>
    <property type="evidence" value="ECO:0000318"/>
    <property type="project" value="GO_Central"/>
</dbReference>
<dbReference type="GO" id="GO:0004372">
    <property type="term" value="F:glycine hydroxymethyltransferase activity"/>
    <property type="evidence" value="ECO:0000318"/>
    <property type="project" value="GO_Central"/>
</dbReference>
<dbReference type="GO" id="GO:0030170">
    <property type="term" value="F:pyridoxal phosphate binding"/>
    <property type="evidence" value="ECO:0000318"/>
    <property type="project" value="GO_Central"/>
</dbReference>
<dbReference type="GO" id="GO:0019264">
    <property type="term" value="P:glycine biosynthetic process from serine"/>
    <property type="evidence" value="ECO:0000318"/>
    <property type="project" value="GO_Central"/>
</dbReference>
<dbReference type="GO" id="GO:0035999">
    <property type="term" value="P:tetrahydrofolate interconversion"/>
    <property type="evidence" value="ECO:0007669"/>
    <property type="project" value="UniProtKB-UniRule"/>
</dbReference>
<dbReference type="GO" id="GO:0046653">
    <property type="term" value="P:tetrahydrofolate metabolic process"/>
    <property type="evidence" value="ECO:0000318"/>
    <property type="project" value="GO_Central"/>
</dbReference>
<dbReference type="CDD" id="cd00378">
    <property type="entry name" value="SHMT"/>
    <property type="match status" value="1"/>
</dbReference>
<dbReference type="FunFam" id="3.40.640.10:FF:000001">
    <property type="entry name" value="Serine hydroxymethyltransferase"/>
    <property type="match status" value="1"/>
</dbReference>
<dbReference type="Gene3D" id="3.90.1150.10">
    <property type="entry name" value="Aspartate Aminotransferase, domain 1"/>
    <property type="match status" value="1"/>
</dbReference>
<dbReference type="Gene3D" id="3.40.640.10">
    <property type="entry name" value="Type I PLP-dependent aspartate aminotransferase-like (Major domain)"/>
    <property type="match status" value="1"/>
</dbReference>
<dbReference type="HAMAP" id="MF_00051">
    <property type="entry name" value="SHMT"/>
    <property type="match status" value="1"/>
</dbReference>
<dbReference type="InterPro" id="IPR015424">
    <property type="entry name" value="PyrdxlP-dep_Trfase"/>
</dbReference>
<dbReference type="InterPro" id="IPR015421">
    <property type="entry name" value="PyrdxlP-dep_Trfase_major"/>
</dbReference>
<dbReference type="InterPro" id="IPR015422">
    <property type="entry name" value="PyrdxlP-dep_Trfase_small"/>
</dbReference>
<dbReference type="InterPro" id="IPR001085">
    <property type="entry name" value="Ser_HO-MeTrfase"/>
</dbReference>
<dbReference type="InterPro" id="IPR049943">
    <property type="entry name" value="Ser_HO-MeTrfase-like"/>
</dbReference>
<dbReference type="InterPro" id="IPR019798">
    <property type="entry name" value="Ser_HO-MeTrfase_PLP_BS"/>
</dbReference>
<dbReference type="InterPro" id="IPR039429">
    <property type="entry name" value="SHMT-like_dom"/>
</dbReference>
<dbReference type="NCBIfam" id="NF000586">
    <property type="entry name" value="PRK00011.1"/>
    <property type="match status" value="1"/>
</dbReference>
<dbReference type="PANTHER" id="PTHR11680">
    <property type="entry name" value="SERINE HYDROXYMETHYLTRANSFERASE"/>
    <property type="match status" value="1"/>
</dbReference>
<dbReference type="PANTHER" id="PTHR11680:SF35">
    <property type="entry name" value="SERINE HYDROXYMETHYLTRANSFERASE 1"/>
    <property type="match status" value="1"/>
</dbReference>
<dbReference type="Pfam" id="PF00464">
    <property type="entry name" value="SHMT"/>
    <property type="match status" value="1"/>
</dbReference>
<dbReference type="PIRSF" id="PIRSF000412">
    <property type="entry name" value="SHMT"/>
    <property type="match status" value="1"/>
</dbReference>
<dbReference type="SUPFAM" id="SSF53383">
    <property type="entry name" value="PLP-dependent transferases"/>
    <property type="match status" value="1"/>
</dbReference>
<dbReference type="PROSITE" id="PS00096">
    <property type="entry name" value="SHMT"/>
    <property type="match status" value="1"/>
</dbReference>
<feature type="chain" id="PRO_0000113598" description="Serine hydroxymethyltransferase">
    <location>
        <begin position="1"/>
        <end position="415"/>
    </location>
</feature>
<feature type="binding site" evidence="1">
    <location>
        <position position="117"/>
    </location>
    <ligand>
        <name>(6S)-5,6,7,8-tetrahydrofolate</name>
        <dbReference type="ChEBI" id="CHEBI:57453"/>
    </ligand>
</feature>
<feature type="binding site" evidence="1">
    <location>
        <begin position="121"/>
        <end position="123"/>
    </location>
    <ligand>
        <name>(6S)-5,6,7,8-tetrahydrofolate</name>
        <dbReference type="ChEBI" id="CHEBI:57453"/>
    </ligand>
</feature>
<feature type="site" description="Plays an important role in substrate specificity" evidence="1">
    <location>
        <position position="225"/>
    </location>
</feature>
<feature type="modified residue" description="N6-(pyridoxal phosphate)lysine" evidence="1">
    <location>
        <position position="226"/>
    </location>
</feature>
<keyword id="KW-0028">Amino-acid biosynthesis</keyword>
<keyword id="KW-0963">Cytoplasm</keyword>
<keyword id="KW-0554">One-carbon metabolism</keyword>
<keyword id="KW-0663">Pyridoxal phosphate</keyword>
<keyword id="KW-1185">Reference proteome</keyword>
<keyword id="KW-0808">Transferase</keyword>
<protein>
    <recommendedName>
        <fullName evidence="1">Serine hydroxymethyltransferase</fullName>
        <shortName evidence="1">SHMT</shortName>
        <shortName evidence="1">Serine methylase</shortName>
        <ecNumber evidence="1">2.1.2.1</ecNumber>
    </recommendedName>
</protein>
<reference key="1">
    <citation type="journal article" date="2003" name="Nature">
        <title>Unique physiological and pathogenic features of Leptospira interrogans revealed by whole-genome sequencing.</title>
        <authorList>
            <person name="Ren S.-X."/>
            <person name="Fu G."/>
            <person name="Jiang X.-G."/>
            <person name="Zeng R."/>
            <person name="Miao Y.-G."/>
            <person name="Xu H."/>
            <person name="Zhang Y.-X."/>
            <person name="Xiong H."/>
            <person name="Lu G."/>
            <person name="Lu L.-F."/>
            <person name="Jiang H.-Q."/>
            <person name="Jia J."/>
            <person name="Tu Y.-F."/>
            <person name="Jiang J.-X."/>
            <person name="Gu W.-Y."/>
            <person name="Zhang Y.-Q."/>
            <person name="Cai Z."/>
            <person name="Sheng H.-H."/>
            <person name="Yin H.-F."/>
            <person name="Zhang Y."/>
            <person name="Zhu G.-F."/>
            <person name="Wan M."/>
            <person name="Huang H.-L."/>
            <person name="Qian Z."/>
            <person name="Wang S.-Y."/>
            <person name="Ma W."/>
            <person name="Yao Z.-J."/>
            <person name="Shen Y."/>
            <person name="Qiang B.-Q."/>
            <person name="Xia Q.-C."/>
            <person name="Guo X.-K."/>
            <person name="Danchin A."/>
            <person name="Saint Girons I."/>
            <person name="Somerville R.L."/>
            <person name="Wen Y.-M."/>
            <person name="Shi M.-H."/>
            <person name="Chen Z."/>
            <person name="Xu J.-G."/>
            <person name="Zhao G.-P."/>
        </authorList>
    </citation>
    <scope>NUCLEOTIDE SEQUENCE [LARGE SCALE GENOMIC DNA]</scope>
    <source>
        <strain>56601</strain>
    </source>
</reference>
<gene>
    <name evidence="1" type="primary">glyA</name>
    <name type="ordered locus">LA_1409</name>
</gene>
<evidence type="ECO:0000255" key="1">
    <source>
        <dbReference type="HAMAP-Rule" id="MF_00051"/>
    </source>
</evidence>
<sequence length="415" mass="44974">MQFLPKADPEIFAALKKEDERQENNLEMIASENFVSRAVLEAYTSTLTNKYAEGYPGKRYYNGCHNADVVETLAIERAKKLFGSQYANVQPHSGAQANMAVFLACLEPGDSFLGMNLAHGGHLTHGSPVNVSGKIYKPIPYGVDSKTETINYDEVAKLAREHKPKLIVAGASAYARTIDFSKFAEIAKEVGAKLMADIAHISGLVATGYHPSPIGMFDFVTTTTHKTLRGPRGGLILSTLENEKVLNSRVFPGIQGGPLMHVIAAKAVAFQEALQPDYKKYIETVLANAKTLAEVFVKRGYRVVSGGTDNHLVLLDVSVKGLTGAQAADGLDEVGVTVNKNAIPFDKNPPAVASGIRLGTPALTTRGLKPADMETVGNLICDFLDHPNDDKNRTKVKGGIQEMTQKFPMNQFRLD</sequence>